<proteinExistence type="inferred from homology"/>
<reference key="1">
    <citation type="journal article" date="2003" name="Nat. Genet.">
        <title>Comparative analysis of the genome sequences of Bordetella pertussis, Bordetella parapertussis and Bordetella bronchiseptica.</title>
        <authorList>
            <person name="Parkhill J."/>
            <person name="Sebaihia M."/>
            <person name="Preston A."/>
            <person name="Murphy L.D."/>
            <person name="Thomson N.R."/>
            <person name="Harris D.E."/>
            <person name="Holden M.T.G."/>
            <person name="Churcher C.M."/>
            <person name="Bentley S.D."/>
            <person name="Mungall K.L."/>
            <person name="Cerdeno-Tarraga A.-M."/>
            <person name="Temple L."/>
            <person name="James K.D."/>
            <person name="Harris B."/>
            <person name="Quail M.A."/>
            <person name="Achtman M."/>
            <person name="Atkin R."/>
            <person name="Baker S."/>
            <person name="Basham D."/>
            <person name="Bason N."/>
            <person name="Cherevach I."/>
            <person name="Chillingworth T."/>
            <person name="Collins M."/>
            <person name="Cronin A."/>
            <person name="Davis P."/>
            <person name="Doggett J."/>
            <person name="Feltwell T."/>
            <person name="Goble A."/>
            <person name="Hamlin N."/>
            <person name="Hauser H."/>
            <person name="Holroyd S."/>
            <person name="Jagels K."/>
            <person name="Leather S."/>
            <person name="Moule S."/>
            <person name="Norberczak H."/>
            <person name="O'Neil S."/>
            <person name="Ormond D."/>
            <person name="Price C."/>
            <person name="Rabbinowitsch E."/>
            <person name="Rutter S."/>
            <person name="Sanders M."/>
            <person name="Saunders D."/>
            <person name="Seeger K."/>
            <person name="Sharp S."/>
            <person name="Simmonds M."/>
            <person name="Skelton J."/>
            <person name="Squares R."/>
            <person name="Squares S."/>
            <person name="Stevens K."/>
            <person name="Unwin L."/>
            <person name="Whitehead S."/>
            <person name="Barrell B.G."/>
            <person name="Maskell D.J."/>
        </authorList>
    </citation>
    <scope>NUCLEOTIDE SEQUENCE [LARGE SCALE GENOMIC DNA]</scope>
    <source>
        <strain>ATCC BAA-588 / NCTC 13252 / RB50</strain>
    </source>
</reference>
<keyword id="KW-0067">ATP-binding</keyword>
<keyword id="KW-0963">Cytoplasm</keyword>
<keyword id="KW-0460">Magnesium</keyword>
<keyword id="KW-0479">Metal-binding</keyword>
<keyword id="KW-0547">Nucleotide-binding</keyword>
<keyword id="KW-0554">One-carbon metabolism</keyword>
<keyword id="KW-0630">Potassium</keyword>
<keyword id="KW-0808">Transferase</keyword>
<comment type="function">
    <text evidence="1">Catalyzes the formation of S-adenosylmethionine (AdoMet) from methionine and ATP. The overall synthetic reaction is composed of two sequential steps, AdoMet formation and the subsequent tripolyphosphate hydrolysis which occurs prior to release of AdoMet from the enzyme.</text>
</comment>
<comment type="catalytic activity">
    <reaction evidence="1">
        <text>L-methionine + ATP + H2O = S-adenosyl-L-methionine + phosphate + diphosphate</text>
        <dbReference type="Rhea" id="RHEA:21080"/>
        <dbReference type="ChEBI" id="CHEBI:15377"/>
        <dbReference type="ChEBI" id="CHEBI:30616"/>
        <dbReference type="ChEBI" id="CHEBI:33019"/>
        <dbReference type="ChEBI" id="CHEBI:43474"/>
        <dbReference type="ChEBI" id="CHEBI:57844"/>
        <dbReference type="ChEBI" id="CHEBI:59789"/>
        <dbReference type="EC" id="2.5.1.6"/>
    </reaction>
</comment>
<comment type="cofactor">
    <cofactor evidence="1">
        <name>Mg(2+)</name>
        <dbReference type="ChEBI" id="CHEBI:18420"/>
    </cofactor>
    <text evidence="1">Binds 2 divalent ions per subunit.</text>
</comment>
<comment type="cofactor">
    <cofactor evidence="1">
        <name>K(+)</name>
        <dbReference type="ChEBI" id="CHEBI:29103"/>
    </cofactor>
    <text evidence="1">Binds 1 potassium ion per subunit.</text>
</comment>
<comment type="pathway">
    <text evidence="1">Amino-acid biosynthesis; S-adenosyl-L-methionine biosynthesis; S-adenosyl-L-methionine from L-methionine: step 1/1.</text>
</comment>
<comment type="subunit">
    <text evidence="1">Homotetramer; dimer of dimers.</text>
</comment>
<comment type="subcellular location">
    <subcellularLocation>
        <location evidence="1">Cytoplasm</location>
    </subcellularLocation>
</comment>
<comment type="similarity">
    <text evidence="1">Belongs to the AdoMet synthase family.</text>
</comment>
<comment type="sequence caution" evidence="2">
    <conflict type="erroneous initiation">
        <sequence resource="EMBL-CDS" id="CAE30694"/>
    </conflict>
</comment>
<sequence length="387" mass="42002">MANNDFLFTSESVSEGHPDKVADQISDAILDAIFTQDPNARVAAETLCNTGLVVLAGEITTTANVDYIQVARDTIRHIGYDNTEYGIDYKGCAVLVAYDKQSPDIAQGVDRSSEDYLNQGAGDQGLMFGYACDETPDLMPAPIWYAHRLVQRQSELRKDGRLPWLRPDAKSQVTFRYVDGRPAEVDTVVLSTQHSPEISQASIREAVIEDIIKPSFPEGLITPKTKFLVNPTGRFVIGGPQGDCGLTGRKIIVDTYGGACPHGGGAFSGKDPSKVDRSAAYAARYVAKNVVAAGLARQCQVQVSYAIGVAEPINITVYTEGTGVIPDEQIAKLVREHFDLRPKGIVNMLDLLRPIYTKTAAYGHFGRSEPEFSWEATDKAAALKQGA</sequence>
<accession>Q7WQX8</accession>
<feature type="chain" id="PRO_0000174496" description="S-adenosylmethionine synthase">
    <location>
        <begin position="1"/>
        <end position="387"/>
    </location>
</feature>
<feature type="region of interest" description="Flexible loop" evidence="1">
    <location>
        <begin position="101"/>
        <end position="111"/>
    </location>
</feature>
<feature type="binding site" description="in other chain" evidence="1">
    <location>
        <position position="17"/>
    </location>
    <ligand>
        <name>ATP</name>
        <dbReference type="ChEBI" id="CHEBI:30616"/>
        <note>ligand shared between two neighboring subunits</note>
    </ligand>
</feature>
<feature type="binding site" evidence="1">
    <location>
        <position position="19"/>
    </location>
    <ligand>
        <name>Mg(2+)</name>
        <dbReference type="ChEBI" id="CHEBI:18420"/>
    </ligand>
</feature>
<feature type="binding site" evidence="1">
    <location>
        <position position="45"/>
    </location>
    <ligand>
        <name>K(+)</name>
        <dbReference type="ChEBI" id="CHEBI:29103"/>
    </ligand>
</feature>
<feature type="binding site" description="in other chain" evidence="1">
    <location>
        <position position="58"/>
    </location>
    <ligand>
        <name>L-methionine</name>
        <dbReference type="ChEBI" id="CHEBI:57844"/>
        <note>ligand shared between two neighboring subunits</note>
    </ligand>
</feature>
<feature type="binding site" description="in other chain" evidence="1">
    <location>
        <position position="101"/>
    </location>
    <ligand>
        <name>L-methionine</name>
        <dbReference type="ChEBI" id="CHEBI:57844"/>
        <note>ligand shared between two neighboring subunits</note>
    </ligand>
</feature>
<feature type="binding site" description="in other chain" evidence="1">
    <location>
        <begin position="168"/>
        <end position="170"/>
    </location>
    <ligand>
        <name>ATP</name>
        <dbReference type="ChEBI" id="CHEBI:30616"/>
        <note>ligand shared between two neighboring subunits</note>
    </ligand>
</feature>
<feature type="binding site" description="in other chain" evidence="1">
    <location>
        <begin position="234"/>
        <end position="235"/>
    </location>
    <ligand>
        <name>ATP</name>
        <dbReference type="ChEBI" id="CHEBI:30616"/>
        <note>ligand shared between two neighboring subunits</note>
    </ligand>
</feature>
<feature type="binding site" evidence="1">
    <location>
        <position position="243"/>
    </location>
    <ligand>
        <name>ATP</name>
        <dbReference type="ChEBI" id="CHEBI:30616"/>
        <note>ligand shared between two neighboring subunits</note>
    </ligand>
</feature>
<feature type="binding site" evidence="1">
    <location>
        <position position="243"/>
    </location>
    <ligand>
        <name>L-methionine</name>
        <dbReference type="ChEBI" id="CHEBI:57844"/>
        <note>ligand shared between two neighboring subunits</note>
    </ligand>
</feature>
<feature type="binding site" description="in other chain" evidence="1">
    <location>
        <begin position="249"/>
        <end position="250"/>
    </location>
    <ligand>
        <name>ATP</name>
        <dbReference type="ChEBI" id="CHEBI:30616"/>
        <note>ligand shared between two neighboring subunits</note>
    </ligand>
</feature>
<feature type="binding site" evidence="1">
    <location>
        <position position="266"/>
    </location>
    <ligand>
        <name>ATP</name>
        <dbReference type="ChEBI" id="CHEBI:30616"/>
        <note>ligand shared between two neighboring subunits</note>
    </ligand>
</feature>
<feature type="binding site" evidence="1">
    <location>
        <position position="270"/>
    </location>
    <ligand>
        <name>ATP</name>
        <dbReference type="ChEBI" id="CHEBI:30616"/>
        <note>ligand shared between two neighboring subunits</note>
    </ligand>
</feature>
<feature type="binding site" description="in other chain" evidence="1">
    <location>
        <position position="274"/>
    </location>
    <ligand>
        <name>L-methionine</name>
        <dbReference type="ChEBI" id="CHEBI:57844"/>
        <note>ligand shared between two neighboring subunits</note>
    </ligand>
</feature>
<protein>
    <recommendedName>
        <fullName evidence="1">S-adenosylmethionine synthase</fullName>
        <shortName evidence="1">AdoMet synthase</shortName>
        <ecNumber evidence="1">2.5.1.6</ecNumber>
    </recommendedName>
    <alternativeName>
        <fullName evidence="1">MAT</fullName>
    </alternativeName>
    <alternativeName>
        <fullName evidence="1">Methionine adenosyltransferase</fullName>
    </alternativeName>
</protein>
<name>METK_BORBR</name>
<organism>
    <name type="scientific">Bordetella bronchiseptica (strain ATCC BAA-588 / NCTC 13252 / RB50)</name>
    <name type="common">Alcaligenes bronchisepticus</name>
    <dbReference type="NCBI Taxonomy" id="257310"/>
    <lineage>
        <taxon>Bacteria</taxon>
        <taxon>Pseudomonadati</taxon>
        <taxon>Pseudomonadota</taxon>
        <taxon>Betaproteobacteria</taxon>
        <taxon>Burkholderiales</taxon>
        <taxon>Alcaligenaceae</taxon>
        <taxon>Bordetella</taxon>
    </lineage>
</organism>
<dbReference type="EC" id="2.5.1.6" evidence="1"/>
<dbReference type="EMBL" id="BX640437">
    <property type="protein sequence ID" value="CAE30694.1"/>
    <property type="status" value="ALT_INIT"/>
    <property type="molecule type" value="Genomic_DNA"/>
</dbReference>
<dbReference type="RefSeq" id="WP_010925730.1">
    <property type="nucleotide sequence ID" value="NC_002927.3"/>
</dbReference>
<dbReference type="SMR" id="Q7WQX8"/>
<dbReference type="GeneID" id="93206423"/>
<dbReference type="KEGG" id="bbr:BB0195"/>
<dbReference type="eggNOG" id="COG0192">
    <property type="taxonomic scope" value="Bacteria"/>
</dbReference>
<dbReference type="HOGENOM" id="CLU_041802_1_1_4"/>
<dbReference type="UniPathway" id="UPA00315">
    <property type="reaction ID" value="UER00080"/>
</dbReference>
<dbReference type="Proteomes" id="UP000001027">
    <property type="component" value="Chromosome"/>
</dbReference>
<dbReference type="GO" id="GO:0005737">
    <property type="term" value="C:cytoplasm"/>
    <property type="evidence" value="ECO:0007669"/>
    <property type="project" value="UniProtKB-SubCell"/>
</dbReference>
<dbReference type="GO" id="GO:0005524">
    <property type="term" value="F:ATP binding"/>
    <property type="evidence" value="ECO:0007669"/>
    <property type="project" value="UniProtKB-UniRule"/>
</dbReference>
<dbReference type="GO" id="GO:0000287">
    <property type="term" value="F:magnesium ion binding"/>
    <property type="evidence" value="ECO:0007669"/>
    <property type="project" value="UniProtKB-UniRule"/>
</dbReference>
<dbReference type="GO" id="GO:0004478">
    <property type="term" value="F:methionine adenosyltransferase activity"/>
    <property type="evidence" value="ECO:0007669"/>
    <property type="project" value="UniProtKB-UniRule"/>
</dbReference>
<dbReference type="GO" id="GO:0006730">
    <property type="term" value="P:one-carbon metabolic process"/>
    <property type="evidence" value="ECO:0007669"/>
    <property type="project" value="UniProtKB-KW"/>
</dbReference>
<dbReference type="GO" id="GO:0006556">
    <property type="term" value="P:S-adenosylmethionine biosynthetic process"/>
    <property type="evidence" value="ECO:0007669"/>
    <property type="project" value="UniProtKB-UniRule"/>
</dbReference>
<dbReference type="CDD" id="cd18079">
    <property type="entry name" value="S-AdoMet_synt"/>
    <property type="match status" value="1"/>
</dbReference>
<dbReference type="FunFam" id="3.30.300.10:FF:000003">
    <property type="entry name" value="S-adenosylmethionine synthase"/>
    <property type="match status" value="1"/>
</dbReference>
<dbReference type="FunFam" id="3.30.300.10:FF:000004">
    <property type="entry name" value="S-adenosylmethionine synthase"/>
    <property type="match status" value="1"/>
</dbReference>
<dbReference type="Gene3D" id="3.30.300.10">
    <property type="match status" value="3"/>
</dbReference>
<dbReference type="HAMAP" id="MF_00086">
    <property type="entry name" value="S_AdoMet_synth1"/>
    <property type="match status" value="1"/>
</dbReference>
<dbReference type="InterPro" id="IPR022631">
    <property type="entry name" value="ADOMET_SYNTHASE_CS"/>
</dbReference>
<dbReference type="InterPro" id="IPR022630">
    <property type="entry name" value="S-AdoMet_synt_C"/>
</dbReference>
<dbReference type="InterPro" id="IPR022629">
    <property type="entry name" value="S-AdoMet_synt_central"/>
</dbReference>
<dbReference type="InterPro" id="IPR022628">
    <property type="entry name" value="S-AdoMet_synt_N"/>
</dbReference>
<dbReference type="InterPro" id="IPR002133">
    <property type="entry name" value="S-AdoMet_synthetase"/>
</dbReference>
<dbReference type="InterPro" id="IPR022636">
    <property type="entry name" value="S-AdoMet_synthetase_sfam"/>
</dbReference>
<dbReference type="NCBIfam" id="TIGR01034">
    <property type="entry name" value="metK"/>
    <property type="match status" value="1"/>
</dbReference>
<dbReference type="PANTHER" id="PTHR11964">
    <property type="entry name" value="S-ADENOSYLMETHIONINE SYNTHETASE"/>
    <property type="match status" value="1"/>
</dbReference>
<dbReference type="Pfam" id="PF02773">
    <property type="entry name" value="S-AdoMet_synt_C"/>
    <property type="match status" value="1"/>
</dbReference>
<dbReference type="Pfam" id="PF02772">
    <property type="entry name" value="S-AdoMet_synt_M"/>
    <property type="match status" value="1"/>
</dbReference>
<dbReference type="Pfam" id="PF00438">
    <property type="entry name" value="S-AdoMet_synt_N"/>
    <property type="match status" value="1"/>
</dbReference>
<dbReference type="PIRSF" id="PIRSF000497">
    <property type="entry name" value="MAT"/>
    <property type="match status" value="1"/>
</dbReference>
<dbReference type="SUPFAM" id="SSF55973">
    <property type="entry name" value="S-adenosylmethionine synthetase"/>
    <property type="match status" value="3"/>
</dbReference>
<dbReference type="PROSITE" id="PS00376">
    <property type="entry name" value="ADOMET_SYNTHASE_1"/>
    <property type="match status" value="1"/>
</dbReference>
<dbReference type="PROSITE" id="PS00377">
    <property type="entry name" value="ADOMET_SYNTHASE_2"/>
    <property type="match status" value="1"/>
</dbReference>
<gene>
    <name evidence="1" type="primary">metK</name>
    <name type="ordered locus">BB0195</name>
</gene>
<evidence type="ECO:0000255" key="1">
    <source>
        <dbReference type="HAMAP-Rule" id="MF_00086"/>
    </source>
</evidence>
<evidence type="ECO:0000305" key="2"/>